<comment type="function">
    <text evidence="1">Functions in the N-end rule pathway of protein degradation where it conjugates Leu, Phe and, less efficiently, Met from aminoacyl-tRNAs to the N-termini of proteins containing an N-terminal arginine or lysine.</text>
</comment>
<comment type="catalytic activity">
    <reaction evidence="1">
        <text>N-terminal L-lysyl-[protein] + L-leucyl-tRNA(Leu) = N-terminal L-leucyl-L-lysyl-[protein] + tRNA(Leu) + H(+)</text>
        <dbReference type="Rhea" id="RHEA:12340"/>
        <dbReference type="Rhea" id="RHEA-COMP:9613"/>
        <dbReference type="Rhea" id="RHEA-COMP:9622"/>
        <dbReference type="Rhea" id="RHEA-COMP:12670"/>
        <dbReference type="Rhea" id="RHEA-COMP:12671"/>
        <dbReference type="ChEBI" id="CHEBI:15378"/>
        <dbReference type="ChEBI" id="CHEBI:65249"/>
        <dbReference type="ChEBI" id="CHEBI:78442"/>
        <dbReference type="ChEBI" id="CHEBI:78494"/>
        <dbReference type="ChEBI" id="CHEBI:133043"/>
        <dbReference type="EC" id="2.3.2.6"/>
    </reaction>
</comment>
<comment type="catalytic activity">
    <reaction evidence="1">
        <text>N-terminal L-arginyl-[protein] + L-leucyl-tRNA(Leu) = N-terminal L-leucyl-L-arginyl-[protein] + tRNA(Leu) + H(+)</text>
        <dbReference type="Rhea" id="RHEA:50416"/>
        <dbReference type="Rhea" id="RHEA-COMP:9613"/>
        <dbReference type="Rhea" id="RHEA-COMP:9622"/>
        <dbReference type="Rhea" id="RHEA-COMP:12672"/>
        <dbReference type="Rhea" id="RHEA-COMP:12673"/>
        <dbReference type="ChEBI" id="CHEBI:15378"/>
        <dbReference type="ChEBI" id="CHEBI:64719"/>
        <dbReference type="ChEBI" id="CHEBI:78442"/>
        <dbReference type="ChEBI" id="CHEBI:78494"/>
        <dbReference type="ChEBI" id="CHEBI:133044"/>
        <dbReference type="EC" id="2.3.2.6"/>
    </reaction>
</comment>
<comment type="catalytic activity">
    <reaction evidence="1">
        <text>L-phenylalanyl-tRNA(Phe) + an N-terminal L-alpha-aminoacyl-[protein] = an N-terminal L-phenylalanyl-L-alpha-aminoacyl-[protein] + tRNA(Phe)</text>
        <dbReference type="Rhea" id="RHEA:43632"/>
        <dbReference type="Rhea" id="RHEA-COMP:9668"/>
        <dbReference type="Rhea" id="RHEA-COMP:9699"/>
        <dbReference type="Rhea" id="RHEA-COMP:10636"/>
        <dbReference type="Rhea" id="RHEA-COMP:10637"/>
        <dbReference type="ChEBI" id="CHEBI:78442"/>
        <dbReference type="ChEBI" id="CHEBI:78531"/>
        <dbReference type="ChEBI" id="CHEBI:78597"/>
        <dbReference type="ChEBI" id="CHEBI:83561"/>
        <dbReference type="EC" id="2.3.2.6"/>
    </reaction>
</comment>
<comment type="subcellular location">
    <subcellularLocation>
        <location evidence="1">Cytoplasm</location>
    </subcellularLocation>
</comment>
<comment type="similarity">
    <text evidence="1">Belongs to the L/F-transferase family.</text>
</comment>
<organism>
    <name type="scientific">Agrobacterium fabrum (strain C58 / ATCC 33970)</name>
    <name type="common">Agrobacterium tumefaciens (strain C58)</name>
    <dbReference type="NCBI Taxonomy" id="176299"/>
    <lineage>
        <taxon>Bacteria</taxon>
        <taxon>Pseudomonadati</taxon>
        <taxon>Pseudomonadota</taxon>
        <taxon>Alphaproteobacteria</taxon>
        <taxon>Hyphomicrobiales</taxon>
        <taxon>Rhizobiaceae</taxon>
        <taxon>Rhizobium/Agrobacterium group</taxon>
        <taxon>Agrobacterium</taxon>
        <taxon>Agrobacterium tumefaciens complex</taxon>
    </lineage>
</organism>
<gene>
    <name evidence="1" type="primary">aat</name>
    <name type="ordered locus">Atu1329</name>
    <name type="ORF">AGR_C_2449</name>
</gene>
<reference key="1">
    <citation type="journal article" date="2001" name="Science">
        <title>The genome of the natural genetic engineer Agrobacterium tumefaciens C58.</title>
        <authorList>
            <person name="Wood D.W."/>
            <person name="Setubal J.C."/>
            <person name="Kaul R."/>
            <person name="Monks D.E."/>
            <person name="Kitajima J.P."/>
            <person name="Okura V.K."/>
            <person name="Zhou Y."/>
            <person name="Chen L."/>
            <person name="Wood G.E."/>
            <person name="Almeida N.F. Jr."/>
            <person name="Woo L."/>
            <person name="Chen Y."/>
            <person name="Paulsen I.T."/>
            <person name="Eisen J.A."/>
            <person name="Karp P.D."/>
            <person name="Bovee D. Sr."/>
            <person name="Chapman P."/>
            <person name="Clendenning J."/>
            <person name="Deatherage G."/>
            <person name="Gillet W."/>
            <person name="Grant C."/>
            <person name="Kutyavin T."/>
            <person name="Levy R."/>
            <person name="Li M.-J."/>
            <person name="McClelland E."/>
            <person name="Palmieri A."/>
            <person name="Raymond C."/>
            <person name="Rouse G."/>
            <person name="Saenphimmachak C."/>
            <person name="Wu Z."/>
            <person name="Romero P."/>
            <person name="Gordon D."/>
            <person name="Zhang S."/>
            <person name="Yoo H."/>
            <person name="Tao Y."/>
            <person name="Biddle P."/>
            <person name="Jung M."/>
            <person name="Krespan W."/>
            <person name="Perry M."/>
            <person name="Gordon-Kamm B."/>
            <person name="Liao L."/>
            <person name="Kim S."/>
            <person name="Hendrick C."/>
            <person name="Zhao Z.-Y."/>
            <person name="Dolan M."/>
            <person name="Chumley F."/>
            <person name="Tingey S.V."/>
            <person name="Tomb J.-F."/>
            <person name="Gordon M.P."/>
            <person name="Olson M.V."/>
            <person name="Nester E.W."/>
        </authorList>
    </citation>
    <scope>NUCLEOTIDE SEQUENCE [LARGE SCALE GENOMIC DNA]</scope>
    <source>
        <strain>C58 / ATCC 33970</strain>
    </source>
</reference>
<reference key="2">
    <citation type="journal article" date="2001" name="Science">
        <title>Genome sequence of the plant pathogen and biotechnology agent Agrobacterium tumefaciens C58.</title>
        <authorList>
            <person name="Goodner B."/>
            <person name="Hinkle G."/>
            <person name="Gattung S."/>
            <person name="Miller N."/>
            <person name="Blanchard M."/>
            <person name="Qurollo B."/>
            <person name="Goldman B.S."/>
            <person name="Cao Y."/>
            <person name="Askenazi M."/>
            <person name="Halling C."/>
            <person name="Mullin L."/>
            <person name="Houmiel K."/>
            <person name="Gordon J."/>
            <person name="Vaudin M."/>
            <person name="Iartchouk O."/>
            <person name="Epp A."/>
            <person name="Liu F."/>
            <person name="Wollam C."/>
            <person name="Allinger M."/>
            <person name="Doughty D."/>
            <person name="Scott C."/>
            <person name="Lappas C."/>
            <person name="Markelz B."/>
            <person name="Flanagan C."/>
            <person name="Crowell C."/>
            <person name="Gurson J."/>
            <person name="Lomo C."/>
            <person name="Sear C."/>
            <person name="Strub G."/>
            <person name="Cielo C."/>
            <person name="Slater S."/>
        </authorList>
    </citation>
    <scope>NUCLEOTIDE SEQUENCE [LARGE SCALE GENOMIC DNA]</scope>
    <source>
        <strain>C58 / ATCC 33970</strain>
    </source>
</reference>
<sequence>MAGRRSRNNDITVDILLRAYSAGLFPMADSADDPELFWVEPEIRGIIPLDDFHVSKSLAKAMRKKPFAIRFNTAFEDVMAGCAAEAADRPSTWINATIRRLYTELHQIGHAHSVEAWEGDELVGGLYGVSLGAAFFGESMFSRRTNASKICLVHLVERLNAKGFVLLDTQFTTEHLKTFGAIDVPKLDYARMLDLAVNRPSLQF</sequence>
<accession>Q8UFR8</accession>
<keyword id="KW-0012">Acyltransferase</keyword>
<keyword id="KW-0963">Cytoplasm</keyword>
<keyword id="KW-1185">Reference proteome</keyword>
<keyword id="KW-0808">Transferase</keyword>
<name>LFTR_AGRFC</name>
<dbReference type="EC" id="2.3.2.6" evidence="1"/>
<dbReference type="EMBL" id="AE007869">
    <property type="protein sequence ID" value="AAK87120.1"/>
    <property type="molecule type" value="Genomic_DNA"/>
</dbReference>
<dbReference type="PIR" id="AI2739">
    <property type="entry name" value="AI2739"/>
</dbReference>
<dbReference type="PIR" id="G97520">
    <property type="entry name" value="G97520"/>
</dbReference>
<dbReference type="RefSeq" id="NP_354335.1">
    <property type="nucleotide sequence ID" value="NC_003062.2"/>
</dbReference>
<dbReference type="RefSeq" id="WP_010971546.1">
    <property type="nucleotide sequence ID" value="NC_003062.2"/>
</dbReference>
<dbReference type="SMR" id="Q8UFR8"/>
<dbReference type="STRING" id="176299.Atu1329"/>
<dbReference type="EnsemblBacteria" id="AAK87120">
    <property type="protein sequence ID" value="AAK87120"/>
    <property type="gene ID" value="Atu1329"/>
</dbReference>
<dbReference type="GeneID" id="1133367"/>
<dbReference type="KEGG" id="atu:Atu1329"/>
<dbReference type="PATRIC" id="fig|176299.10.peg.1346"/>
<dbReference type="eggNOG" id="COG2360">
    <property type="taxonomic scope" value="Bacteria"/>
</dbReference>
<dbReference type="HOGENOM" id="CLU_075045_1_1_5"/>
<dbReference type="OrthoDB" id="9790282at2"/>
<dbReference type="PhylomeDB" id="Q8UFR8"/>
<dbReference type="BioCyc" id="AGRO:ATU1329-MONOMER"/>
<dbReference type="Proteomes" id="UP000000813">
    <property type="component" value="Chromosome circular"/>
</dbReference>
<dbReference type="GO" id="GO:0005737">
    <property type="term" value="C:cytoplasm"/>
    <property type="evidence" value="ECO:0007669"/>
    <property type="project" value="UniProtKB-SubCell"/>
</dbReference>
<dbReference type="GO" id="GO:0008914">
    <property type="term" value="F:leucyl-tRNA--protein transferase activity"/>
    <property type="evidence" value="ECO:0007669"/>
    <property type="project" value="UniProtKB-UniRule"/>
</dbReference>
<dbReference type="GO" id="GO:0030163">
    <property type="term" value="P:protein catabolic process"/>
    <property type="evidence" value="ECO:0007669"/>
    <property type="project" value="UniProtKB-UniRule"/>
</dbReference>
<dbReference type="FunFam" id="3.40.630.70:FF:000001">
    <property type="entry name" value="Leucyl/phenylalanyl-tRNA--protein transferase"/>
    <property type="match status" value="1"/>
</dbReference>
<dbReference type="Gene3D" id="3.40.630.70">
    <property type="entry name" value="Leucyl/phenylalanyl-tRNA-protein transferase, C-terminal domain"/>
    <property type="match status" value="1"/>
</dbReference>
<dbReference type="HAMAP" id="MF_00688">
    <property type="entry name" value="Leu_Phe_trans"/>
    <property type="match status" value="1"/>
</dbReference>
<dbReference type="InterPro" id="IPR016181">
    <property type="entry name" value="Acyl_CoA_acyltransferase"/>
</dbReference>
<dbReference type="InterPro" id="IPR004616">
    <property type="entry name" value="Leu/Phe-tRNA_Trfase"/>
</dbReference>
<dbReference type="InterPro" id="IPR042203">
    <property type="entry name" value="Leu/Phe-tRNA_Trfase_C"/>
</dbReference>
<dbReference type="NCBIfam" id="TIGR00667">
    <property type="entry name" value="aat"/>
    <property type="match status" value="1"/>
</dbReference>
<dbReference type="PANTHER" id="PTHR30098">
    <property type="entry name" value="LEUCYL/PHENYLALANYL-TRNA--PROTEIN TRANSFERASE"/>
    <property type="match status" value="1"/>
</dbReference>
<dbReference type="PANTHER" id="PTHR30098:SF2">
    <property type="entry name" value="LEUCYL_PHENYLALANYL-TRNA--PROTEIN TRANSFERASE"/>
    <property type="match status" value="1"/>
</dbReference>
<dbReference type="Pfam" id="PF03588">
    <property type="entry name" value="Leu_Phe_trans"/>
    <property type="match status" value="1"/>
</dbReference>
<dbReference type="SUPFAM" id="SSF55729">
    <property type="entry name" value="Acyl-CoA N-acyltransferases (Nat)"/>
    <property type="match status" value="1"/>
</dbReference>
<proteinExistence type="inferred from homology"/>
<protein>
    <recommendedName>
        <fullName evidence="1">Leucyl/phenylalanyl-tRNA--protein transferase</fullName>
        <ecNumber evidence="1">2.3.2.6</ecNumber>
    </recommendedName>
    <alternativeName>
        <fullName evidence="1">L/F-transferase</fullName>
    </alternativeName>
    <alternativeName>
        <fullName evidence="1">Leucyltransferase</fullName>
    </alternativeName>
    <alternativeName>
        <fullName evidence="1">Phenyalanyltransferase</fullName>
    </alternativeName>
</protein>
<feature type="chain" id="PRO_0000207203" description="Leucyl/phenylalanyl-tRNA--protein transferase">
    <location>
        <begin position="1"/>
        <end position="204"/>
    </location>
</feature>
<evidence type="ECO:0000255" key="1">
    <source>
        <dbReference type="HAMAP-Rule" id="MF_00688"/>
    </source>
</evidence>